<comment type="function">
    <text evidence="1">One of the primary rRNA binding proteins, it binds directly to 16S rRNA where it helps nucleate assembly of the platform of the 30S subunit by binding and bridging several RNA helices of the 16S rRNA.</text>
</comment>
<comment type="function">
    <text evidence="1">Forms an intersubunit bridge (bridge B4) with the 23S rRNA of the 50S subunit in the ribosome.</text>
</comment>
<comment type="subunit">
    <text evidence="1">Part of the 30S ribosomal subunit. Forms a bridge to the 50S subunit in the 70S ribosome, contacting the 23S rRNA.</text>
</comment>
<comment type="similarity">
    <text evidence="1">Belongs to the universal ribosomal protein uS15 family.</text>
</comment>
<dbReference type="EMBL" id="CP000554">
    <property type="protein sequence ID" value="ABM78329.1"/>
    <property type="molecule type" value="Genomic_DNA"/>
</dbReference>
<dbReference type="RefSeq" id="WP_011130024.1">
    <property type="nucleotide sequence ID" value="NC_008820.1"/>
</dbReference>
<dbReference type="SMR" id="A2CA19"/>
<dbReference type="STRING" id="59922.P9303_15851"/>
<dbReference type="KEGG" id="pmf:P9303_15851"/>
<dbReference type="HOGENOM" id="CLU_148518_0_1_3"/>
<dbReference type="BioCyc" id="PMAR59922:G1G80-1381-MONOMER"/>
<dbReference type="Proteomes" id="UP000002274">
    <property type="component" value="Chromosome"/>
</dbReference>
<dbReference type="GO" id="GO:0022627">
    <property type="term" value="C:cytosolic small ribosomal subunit"/>
    <property type="evidence" value="ECO:0007669"/>
    <property type="project" value="TreeGrafter"/>
</dbReference>
<dbReference type="GO" id="GO:0019843">
    <property type="term" value="F:rRNA binding"/>
    <property type="evidence" value="ECO:0007669"/>
    <property type="project" value="UniProtKB-UniRule"/>
</dbReference>
<dbReference type="GO" id="GO:0003735">
    <property type="term" value="F:structural constituent of ribosome"/>
    <property type="evidence" value="ECO:0007669"/>
    <property type="project" value="InterPro"/>
</dbReference>
<dbReference type="GO" id="GO:0006412">
    <property type="term" value="P:translation"/>
    <property type="evidence" value="ECO:0007669"/>
    <property type="project" value="UniProtKB-UniRule"/>
</dbReference>
<dbReference type="CDD" id="cd00353">
    <property type="entry name" value="Ribosomal_S15p_S13e"/>
    <property type="match status" value="1"/>
</dbReference>
<dbReference type="FunFam" id="1.10.287.10:FF:000002">
    <property type="entry name" value="30S ribosomal protein S15"/>
    <property type="match status" value="1"/>
</dbReference>
<dbReference type="Gene3D" id="6.10.250.3130">
    <property type="match status" value="1"/>
</dbReference>
<dbReference type="Gene3D" id="1.10.287.10">
    <property type="entry name" value="S15/NS1, RNA-binding"/>
    <property type="match status" value="1"/>
</dbReference>
<dbReference type="HAMAP" id="MF_01343_B">
    <property type="entry name" value="Ribosomal_uS15_B"/>
    <property type="match status" value="1"/>
</dbReference>
<dbReference type="InterPro" id="IPR000589">
    <property type="entry name" value="Ribosomal_uS15"/>
</dbReference>
<dbReference type="InterPro" id="IPR005290">
    <property type="entry name" value="Ribosomal_uS15_bac-type"/>
</dbReference>
<dbReference type="InterPro" id="IPR009068">
    <property type="entry name" value="uS15_NS1_RNA-bd_sf"/>
</dbReference>
<dbReference type="NCBIfam" id="TIGR00952">
    <property type="entry name" value="S15_bact"/>
    <property type="match status" value="1"/>
</dbReference>
<dbReference type="PANTHER" id="PTHR23321">
    <property type="entry name" value="RIBOSOMAL PROTEIN S15, BACTERIAL AND ORGANELLAR"/>
    <property type="match status" value="1"/>
</dbReference>
<dbReference type="PANTHER" id="PTHR23321:SF26">
    <property type="entry name" value="SMALL RIBOSOMAL SUBUNIT PROTEIN US15M"/>
    <property type="match status" value="1"/>
</dbReference>
<dbReference type="Pfam" id="PF00312">
    <property type="entry name" value="Ribosomal_S15"/>
    <property type="match status" value="1"/>
</dbReference>
<dbReference type="SMART" id="SM01387">
    <property type="entry name" value="Ribosomal_S15"/>
    <property type="match status" value="1"/>
</dbReference>
<dbReference type="SUPFAM" id="SSF47060">
    <property type="entry name" value="S15/NS1 RNA-binding domain"/>
    <property type="match status" value="1"/>
</dbReference>
<dbReference type="PROSITE" id="PS00362">
    <property type="entry name" value="RIBOSOMAL_S15"/>
    <property type="match status" value="1"/>
</dbReference>
<keyword id="KW-0687">Ribonucleoprotein</keyword>
<keyword id="KW-0689">Ribosomal protein</keyword>
<keyword id="KW-0694">RNA-binding</keyword>
<keyword id="KW-0699">rRNA-binding</keyword>
<proteinExistence type="inferred from homology"/>
<evidence type="ECO:0000255" key="1">
    <source>
        <dbReference type="HAMAP-Rule" id="MF_01343"/>
    </source>
</evidence>
<evidence type="ECO:0000256" key="2">
    <source>
        <dbReference type="SAM" id="MobiDB-lite"/>
    </source>
</evidence>
<evidence type="ECO:0000305" key="3"/>
<feature type="chain" id="PRO_1000054840" description="Small ribosomal subunit protein uS15">
    <location>
        <begin position="1"/>
        <end position="89"/>
    </location>
</feature>
<feature type="region of interest" description="Disordered" evidence="2">
    <location>
        <begin position="1"/>
        <end position="23"/>
    </location>
</feature>
<feature type="compositionally biased region" description="Polar residues" evidence="2">
    <location>
        <begin position="8"/>
        <end position="23"/>
    </location>
</feature>
<sequence>MSLDTTEKQQLINANQTHGTDTGSVEVQVAMLSERITKLSSHLQENKHDFSSRQGLLKMIGRRKRLLSYVRGKSEQRYNGLITKLGIRG</sequence>
<reference key="1">
    <citation type="journal article" date="2007" name="PLoS Genet.">
        <title>Patterns and implications of gene gain and loss in the evolution of Prochlorococcus.</title>
        <authorList>
            <person name="Kettler G.C."/>
            <person name="Martiny A.C."/>
            <person name="Huang K."/>
            <person name="Zucker J."/>
            <person name="Coleman M.L."/>
            <person name="Rodrigue S."/>
            <person name="Chen F."/>
            <person name="Lapidus A."/>
            <person name="Ferriera S."/>
            <person name="Johnson J."/>
            <person name="Steglich C."/>
            <person name="Church G.M."/>
            <person name="Richardson P."/>
            <person name="Chisholm S.W."/>
        </authorList>
    </citation>
    <scope>NUCLEOTIDE SEQUENCE [LARGE SCALE GENOMIC DNA]</scope>
    <source>
        <strain>MIT 9303</strain>
    </source>
</reference>
<gene>
    <name evidence="1" type="primary">rpsO</name>
    <name evidence="1" type="synonym">rps15</name>
    <name type="ordered locus">P9303_15851</name>
</gene>
<organism>
    <name type="scientific">Prochlorococcus marinus (strain MIT 9303)</name>
    <dbReference type="NCBI Taxonomy" id="59922"/>
    <lineage>
        <taxon>Bacteria</taxon>
        <taxon>Bacillati</taxon>
        <taxon>Cyanobacteriota</taxon>
        <taxon>Cyanophyceae</taxon>
        <taxon>Synechococcales</taxon>
        <taxon>Prochlorococcaceae</taxon>
        <taxon>Prochlorococcus</taxon>
    </lineage>
</organism>
<accession>A2CA19</accession>
<name>RS15_PROM3</name>
<protein>
    <recommendedName>
        <fullName evidence="1">Small ribosomal subunit protein uS15</fullName>
    </recommendedName>
    <alternativeName>
        <fullName evidence="3">30S ribosomal protein S15</fullName>
    </alternativeName>
</protein>